<sequence>MFSGVTGILNRGHKIKGTVVLMRKNVLDINSLTTVGGVIGQGFDILGSTVDNLTAFLGRSVSLQLISATKPDATGKGKLGKATFLEGIISSLPTLGAGQSAFKIHFEWDDDMGIPGAFYIKNFMQTEFFLVSLTLDDIPNHGSIYFVCNSWIYNAKHHKIDRIFFANQTYLPSETPAPLVHYREEELNNLRGDGTGERKEWERIYDYDVYNDLGNPDSGENHARPVLGGSETYPYPRRGRTGRKPTRKDPNSESRSDYVYLPRDEAFGHLKSSDFLTYGLKAVSQNVVPALESVFFDLNFTPNEFDSFDEVHGLYEGGIKLPTNILSQISPLPVLKEIFRTDGENTLKYPPPKVIQVSRSGWMTDEEFAREMLAGVNPNVICCLQEFPPRSKLDSQIYGDHTSKISKEHLEPNLEGLTVEEAIQNKKLFLLDHHDSIMPYLRRINSTSTKAYATRTILFLNNNQNLKPLAIELSLPHPQGDEHGAVSYVYQPALEGVESSIWLLAKAYVIVNDSCYHQLVSHWLNTHAVVEPFVIATNRHLSCLHPIYKLLYPHYRDTMNINSLARLSLVNDGGIIEKTFLWGRYSMEMSSKVYKNWVFTEQALPADLIKRGMAIEDPSSPCGVKLVVEDYPYAVDGLEIWAIIKTWVQDYVSLYYTSDEKLRQDSELQAWWKELVEVGHGDKKNEPWWPKMQTREDLIEVCSIVIWTASALHAAVNFGQYSYGGLILNRPTLSRRFMPEKGSAEFEELVKSPQKAYLKTITPKFQTLIDLSVIEILSRHASDELYLGERDNPNWTSDKRALEAFKKFGNKLAEIEKKLTQRNNDEKLRNRHGPVEMPYTLLYPSSKEGLTFRGIPNSISI</sequence>
<reference key="1">
    <citation type="journal article" date="1988" name="Biochem. J.">
        <title>The complete amino acid sequence of a pea (Pisum sativum) seed lipoxygenase predicted from a near full-length cDNA.</title>
        <authorList>
            <person name="Ealing P.M."/>
            <person name="Casey R."/>
        </authorList>
    </citation>
    <scope>NUCLEOTIDE SEQUENCE [MRNA]</scope>
    <source>
        <strain>cv. Birte</strain>
    </source>
</reference>
<reference key="2">
    <citation type="submission" date="1994-04" db="EMBL/GenBank/DDBJ databases">
        <authorList>
            <person name="Casey R."/>
        </authorList>
    </citation>
    <scope>NUCLEOTIDE SEQUENCE [GENOMIC DNA]</scope>
    <source>
        <strain>cv. Birte</strain>
    </source>
</reference>
<feature type="chain" id="PRO_0000220714" description="Seed linoleate 9S-lipoxygenase-3">
    <location>
        <begin position="1"/>
        <end position="861"/>
    </location>
</feature>
<feature type="domain" description="PLAT" evidence="1">
    <location>
        <begin position="41"/>
        <end position="166"/>
    </location>
</feature>
<feature type="domain" description="Lipoxygenase" evidence="2">
    <location>
        <begin position="169"/>
        <end position="861"/>
    </location>
</feature>
<feature type="region of interest" description="Disordered" evidence="3">
    <location>
        <begin position="215"/>
        <end position="257"/>
    </location>
</feature>
<feature type="compositionally biased region" description="Basic residues" evidence="3">
    <location>
        <begin position="237"/>
        <end position="246"/>
    </location>
</feature>
<feature type="compositionally biased region" description="Basic and acidic residues" evidence="3">
    <location>
        <begin position="247"/>
        <end position="257"/>
    </location>
</feature>
<feature type="binding site" evidence="2">
    <location>
        <position position="522"/>
    </location>
    <ligand>
        <name>Fe cation</name>
        <dbReference type="ChEBI" id="CHEBI:24875"/>
        <note>catalytic</note>
    </ligand>
</feature>
<feature type="binding site" evidence="2">
    <location>
        <position position="527"/>
    </location>
    <ligand>
        <name>Fe cation</name>
        <dbReference type="ChEBI" id="CHEBI:24875"/>
        <note>catalytic</note>
    </ligand>
</feature>
<feature type="binding site" evidence="2">
    <location>
        <position position="713"/>
    </location>
    <ligand>
        <name>Fe cation</name>
        <dbReference type="ChEBI" id="CHEBI:24875"/>
        <note>catalytic</note>
    </ligand>
</feature>
<feature type="binding site" evidence="2">
    <location>
        <position position="717"/>
    </location>
    <ligand>
        <name>Fe cation</name>
        <dbReference type="ChEBI" id="CHEBI:24875"/>
        <note>catalytic</note>
    </ligand>
</feature>
<feature type="binding site" evidence="2">
    <location>
        <position position="861"/>
    </location>
    <ligand>
        <name>Fe cation</name>
        <dbReference type="ChEBI" id="CHEBI:24875"/>
        <note>catalytic</note>
    </ligand>
</feature>
<proteinExistence type="evidence at transcript level"/>
<accession>P09918</accession>
<protein>
    <recommendedName>
        <fullName>Seed linoleate 9S-lipoxygenase-3</fullName>
        <ecNumber>1.13.11.58</ecNumber>
    </recommendedName>
    <alternativeName>
        <fullName>Lipoxygenase-3</fullName>
    </alternativeName>
</protein>
<dbReference type="EC" id="1.13.11.58"/>
<dbReference type="EMBL" id="X07807">
    <property type="protein sequence ID" value="CAA30666.1"/>
    <property type="molecule type" value="mRNA"/>
</dbReference>
<dbReference type="EMBL" id="X78581">
    <property type="protein sequence ID" value="CAA55319.1"/>
    <property type="molecule type" value="Genomic_DNA"/>
</dbReference>
<dbReference type="PIR" id="S01142">
    <property type="entry name" value="S01142"/>
</dbReference>
<dbReference type="SMR" id="P09918"/>
<dbReference type="OrthoDB" id="407298at2759"/>
<dbReference type="BRENDA" id="1.13.11.B6">
    <property type="organism ID" value="4872"/>
</dbReference>
<dbReference type="UniPathway" id="UPA00382"/>
<dbReference type="GO" id="GO:0005737">
    <property type="term" value="C:cytoplasm"/>
    <property type="evidence" value="ECO:0007669"/>
    <property type="project" value="UniProtKB-SubCell"/>
</dbReference>
<dbReference type="GO" id="GO:1990136">
    <property type="term" value="F:linoleate 9S-lipoxygenase activity"/>
    <property type="evidence" value="ECO:0007669"/>
    <property type="project" value="UniProtKB-EC"/>
</dbReference>
<dbReference type="GO" id="GO:0046872">
    <property type="term" value="F:metal ion binding"/>
    <property type="evidence" value="ECO:0007669"/>
    <property type="project" value="UniProtKB-KW"/>
</dbReference>
<dbReference type="GO" id="GO:0006633">
    <property type="term" value="P:fatty acid biosynthetic process"/>
    <property type="evidence" value="ECO:0007669"/>
    <property type="project" value="UniProtKB-KW"/>
</dbReference>
<dbReference type="GO" id="GO:0034440">
    <property type="term" value="P:lipid oxidation"/>
    <property type="evidence" value="ECO:0007669"/>
    <property type="project" value="InterPro"/>
</dbReference>
<dbReference type="GO" id="GO:0031408">
    <property type="term" value="P:oxylipin biosynthetic process"/>
    <property type="evidence" value="ECO:0007669"/>
    <property type="project" value="UniProtKB-UniPathway"/>
</dbReference>
<dbReference type="CDD" id="cd01751">
    <property type="entry name" value="PLAT_LH2"/>
    <property type="match status" value="1"/>
</dbReference>
<dbReference type="FunFam" id="1.20.245.10:FF:000002">
    <property type="entry name" value="Lipoxygenase"/>
    <property type="match status" value="1"/>
</dbReference>
<dbReference type="FunFam" id="3.10.450.60:FF:000002">
    <property type="entry name" value="Lipoxygenase"/>
    <property type="match status" value="1"/>
</dbReference>
<dbReference type="FunFam" id="4.10.375.10:FF:000001">
    <property type="entry name" value="Lipoxygenase"/>
    <property type="match status" value="1"/>
</dbReference>
<dbReference type="Gene3D" id="3.10.450.60">
    <property type="match status" value="1"/>
</dbReference>
<dbReference type="Gene3D" id="4.10.375.10">
    <property type="entry name" value="Lipoxygenase-1, Domain 2"/>
    <property type="match status" value="1"/>
</dbReference>
<dbReference type="Gene3D" id="4.10.372.10">
    <property type="entry name" value="Lipoxygenase-1, Domain 3"/>
    <property type="match status" value="1"/>
</dbReference>
<dbReference type="Gene3D" id="1.20.245.10">
    <property type="entry name" value="Lipoxygenase-1, Domain 5"/>
    <property type="match status" value="1"/>
</dbReference>
<dbReference type="Gene3D" id="2.60.60.20">
    <property type="entry name" value="PLAT/LH2 domain"/>
    <property type="match status" value="1"/>
</dbReference>
<dbReference type="InterPro" id="IPR000907">
    <property type="entry name" value="LipOase"/>
</dbReference>
<dbReference type="InterPro" id="IPR013819">
    <property type="entry name" value="LipOase_C"/>
</dbReference>
<dbReference type="InterPro" id="IPR036226">
    <property type="entry name" value="LipOase_C_sf"/>
</dbReference>
<dbReference type="InterPro" id="IPR020834">
    <property type="entry name" value="LipOase_CS"/>
</dbReference>
<dbReference type="InterPro" id="IPR020833">
    <property type="entry name" value="LipOase_Fe_BS"/>
</dbReference>
<dbReference type="InterPro" id="IPR001246">
    <property type="entry name" value="LipOase_plant"/>
</dbReference>
<dbReference type="InterPro" id="IPR042057">
    <property type="entry name" value="Lipoxy_PLAT/LH2"/>
</dbReference>
<dbReference type="InterPro" id="IPR027433">
    <property type="entry name" value="Lipoxygenase_dom_3"/>
</dbReference>
<dbReference type="InterPro" id="IPR001024">
    <property type="entry name" value="PLAT/LH2_dom"/>
</dbReference>
<dbReference type="InterPro" id="IPR036392">
    <property type="entry name" value="PLAT/LH2_dom_sf"/>
</dbReference>
<dbReference type="PANTHER" id="PTHR11771">
    <property type="entry name" value="LIPOXYGENASE"/>
    <property type="match status" value="1"/>
</dbReference>
<dbReference type="Pfam" id="PF00305">
    <property type="entry name" value="Lipoxygenase"/>
    <property type="match status" value="1"/>
</dbReference>
<dbReference type="Pfam" id="PF01477">
    <property type="entry name" value="PLAT"/>
    <property type="match status" value="1"/>
</dbReference>
<dbReference type="PRINTS" id="PR00087">
    <property type="entry name" value="LIPOXYGENASE"/>
</dbReference>
<dbReference type="PRINTS" id="PR00468">
    <property type="entry name" value="PLTLPOXGNASE"/>
</dbReference>
<dbReference type="SMART" id="SM00308">
    <property type="entry name" value="LH2"/>
    <property type="match status" value="1"/>
</dbReference>
<dbReference type="SUPFAM" id="SSF49723">
    <property type="entry name" value="Lipase/lipooxygenase domain (PLAT/LH2 domain)"/>
    <property type="match status" value="1"/>
</dbReference>
<dbReference type="SUPFAM" id="SSF48484">
    <property type="entry name" value="Lipoxigenase"/>
    <property type="match status" value="1"/>
</dbReference>
<dbReference type="PROSITE" id="PS00711">
    <property type="entry name" value="LIPOXYGENASE_1"/>
    <property type="match status" value="1"/>
</dbReference>
<dbReference type="PROSITE" id="PS00081">
    <property type="entry name" value="LIPOXYGENASE_2"/>
    <property type="match status" value="1"/>
</dbReference>
<dbReference type="PROSITE" id="PS51393">
    <property type="entry name" value="LIPOXYGENASE_3"/>
    <property type="match status" value="1"/>
</dbReference>
<dbReference type="PROSITE" id="PS50095">
    <property type="entry name" value="PLAT"/>
    <property type="match status" value="1"/>
</dbReference>
<name>LOX3_PEA</name>
<comment type="function">
    <text>Plant lipoxygenase may be involved in a number of diverse aspects of plant physiology including growth and development, pest resistance, and senescence or responses to wounding. It catalyzes the hydroperoxidation of lipids containing a cis,cis-1,4-pentadiene structure.</text>
</comment>
<comment type="catalytic activity">
    <reaction>
        <text>(9Z,12Z)-octadecadienoate + O2 = (9S)-hydroperoxy-(10E,12Z)-octadecadienoate</text>
        <dbReference type="Rhea" id="RHEA:30291"/>
        <dbReference type="ChEBI" id="CHEBI:15379"/>
        <dbReference type="ChEBI" id="CHEBI:30245"/>
        <dbReference type="ChEBI" id="CHEBI:60955"/>
        <dbReference type="EC" id="1.13.11.58"/>
    </reaction>
</comment>
<comment type="cofactor">
    <cofactor evidence="2">
        <name>Fe cation</name>
        <dbReference type="ChEBI" id="CHEBI:24875"/>
    </cofactor>
    <text evidence="2">Binds 1 Fe cation per subunit.</text>
</comment>
<comment type="pathway">
    <text evidence="2">Lipid metabolism; oxylipin biosynthesis.</text>
</comment>
<comment type="subcellular location">
    <subcellularLocation>
        <location>Cytoplasm</location>
    </subcellularLocation>
</comment>
<comment type="similarity">
    <text evidence="4">Belongs to the lipoxygenase family.</text>
</comment>
<organism>
    <name type="scientific">Pisum sativum</name>
    <name type="common">Garden pea</name>
    <name type="synonym">Lathyrus oleraceus</name>
    <dbReference type="NCBI Taxonomy" id="3888"/>
    <lineage>
        <taxon>Eukaryota</taxon>
        <taxon>Viridiplantae</taxon>
        <taxon>Streptophyta</taxon>
        <taxon>Embryophyta</taxon>
        <taxon>Tracheophyta</taxon>
        <taxon>Spermatophyta</taxon>
        <taxon>Magnoliopsida</taxon>
        <taxon>eudicotyledons</taxon>
        <taxon>Gunneridae</taxon>
        <taxon>Pentapetalae</taxon>
        <taxon>rosids</taxon>
        <taxon>fabids</taxon>
        <taxon>Fabales</taxon>
        <taxon>Fabaceae</taxon>
        <taxon>Papilionoideae</taxon>
        <taxon>50 kb inversion clade</taxon>
        <taxon>NPAAA clade</taxon>
        <taxon>Hologalegina</taxon>
        <taxon>IRL clade</taxon>
        <taxon>Fabeae</taxon>
        <taxon>Pisum</taxon>
    </lineage>
</organism>
<gene>
    <name type="primary">LOX1.3</name>
</gene>
<evidence type="ECO:0000255" key="1">
    <source>
        <dbReference type="PROSITE-ProRule" id="PRU00152"/>
    </source>
</evidence>
<evidence type="ECO:0000255" key="2">
    <source>
        <dbReference type="PROSITE-ProRule" id="PRU00726"/>
    </source>
</evidence>
<evidence type="ECO:0000256" key="3">
    <source>
        <dbReference type="SAM" id="MobiDB-lite"/>
    </source>
</evidence>
<evidence type="ECO:0000305" key="4"/>
<keyword id="KW-0963">Cytoplasm</keyword>
<keyword id="KW-0223">Dioxygenase</keyword>
<keyword id="KW-0275">Fatty acid biosynthesis</keyword>
<keyword id="KW-0276">Fatty acid metabolism</keyword>
<keyword id="KW-0408">Iron</keyword>
<keyword id="KW-0444">Lipid biosynthesis</keyword>
<keyword id="KW-0443">Lipid metabolism</keyword>
<keyword id="KW-0479">Metal-binding</keyword>
<keyword id="KW-0560">Oxidoreductase</keyword>
<keyword id="KW-0925">Oxylipin biosynthesis</keyword>